<name>LIG6_PHACH</name>
<reference key="1">
    <citation type="journal article" date="1990" name="Biochem. Biophys. Res. Commun.">
        <title>Characterization of a new lignin peroxidase gene (GLG6) from Phanerochaete chrysosporium.</title>
        <authorList>
            <person name="Naidu P.S."/>
            <person name="Zhang Y.Z."/>
            <person name="Reddy C.A."/>
        </authorList>
    </citation>
    <scope>NUCLEOTIDE SEQUENCE [MRNA]</scope>
    <source>
        <strain>ATCC 24725 / DSM 6909 / CBS 481.73 / BCRC 36200 / NRRL 6361 / VKM F-1767</strain>
    </source>
</reference>
<dbReference type="EC" id="1.11.1.14" evidence="1"/>
<dbReference type="EMBL" id="M80213">
    <property type="protein sequence ID" value="AAA33737.1"/>
    <property type="molecule type" value="mRNA"/>
</dbReference>
<dbReference type="SMR" id="P50622"/>
<dbReference type="CAZy" id="AA2">
    <property type="family name" value="Auxiliary Activities 2"/>
</dbReference>
<dbReference type="PeroxiBase" id="2415">
    <property type="entry name" value="PcLiP06"/>
</dbReference>
<dbReference type="GlyCosmos" id="P50622">
    <property type="glycosylation" value="1 site, No reported glycans"/>
</dbReference>
<dbReference type="VEuPathDB" id="FungiDB:AGR57_14201"/>
<dbReference type="BioCyc" id="MetaCyc:MONOMER-14342"/>
<dbReference type="UniPathway" id="UPA00892"/>
<dbReference type="GO" id="GO:0016690">
    <property type="term" value="F:diarylpropane peroxidase activity"/>
    <property type="evidence" value="ECO:0007669"/>
    <property type="project" value="UniProtKB-EC"/>
</dbReference>
<dbReference type="GO" id="GO:0020037">
    <property type="term" value="F:heme binding"/>
    <property type="evidence" value="ECO:0007669"/>
    <property type="project" value="InterPro"/>
</dbReference>
<dbReference type="GO" id="GO:0046872">
    <property type="term" value="F:metal ion binding"/>
    <property type="evidence" value="ECO:0007669"/>
    <property type="project" value="UniProtKB-KW"/>
</dbReference>
<dbReference type="GO" id="GO:0034599">
    <property type="term" value="P:cellular response to oxidative stress"/>
    <property type="evidence" value="ECO:0007669"/>
    <property type="project" value="InterPro"/>
</dbReference>
<dbReference type="GO" id="GO:0042744">
    <property type="term" value="P:hydrogen peroxide catabolic process"/>
    <property type="evidence" value="ECO:0007669"/>
    <property type="project" value="UniProtKB-KW"/>
</dbReference>
<dbReference type="GO" id="GO:0046274">
    <property type="term" value="P:lignin catabolic process"/>
    <property type="evidence" value="ECO:0007669"/>
    <property type="project" value="UniProtKB-UniPathway"/>
</dbReference>
<dbReference type="GO" id="GO:0000302">
    <property type="term" value="P:response to reactive oxygen species"/>
    <property type="evidence" value="ECO:0007669"/>
    <property type="project" value="TreeGrafter"/>
</dbReference>
<dbReference type="CDD" id="cd00692">
    <property type="entry name" value="ligninase"/>
    <property type="match status" value="1"/>
</dbReference>
<dbReference type="Gene3D" id="1.10.520.10">
    <property type="match status" value="1"/>
</dbReference>
<dbReference type="Gene3D" id="1.10.420.10">
    <property type="entry name" value="Peroxidase, domain 2"/>
    <property type="match status" value="1"/>
</dbReference>
<dbReference type="InterPro" id="IPR044831">
    <property type="entry name" value="Ccp1-like"/>
</dbReference>
<dbReference type="InterPro" id="IPR002016">
    <property type="entry name" value="Haem_peroxidase"/>
</dbReference>
<dbReference type="InterPro" id="IPR010255">
    <property type="entry name" value="Haem_peroxidase_sf"/>
</dbReference>
<dbReference type="InterPro" id="IPR001621">
    <property type="entry name" value="Ligninase"/>
</dbReference>
<dbReference type="InterPro" id="IPR024589">
    <property type="entry name" value="Ligninase_C"/>
</dbReference>
<dbReference type="InterPro" id="IPR019794">
    <property type="entry name" value="Peroxidases_AS"/>
</dbReference>
<dbReference type="InterPro" id="IPR019793">
    <property type="entry name" value="Peroxidases_heam-ligand_BS"/>
</dbReference>
<dbReference type="PANTHER" id="PTHR31356:SF66">
    <property type="entry name" value="CATALASE-PEROXIDASE"/>
    <property type="match status" value="1"/>
</dbReference>
<dbReference type="PANTHER" id="PTHR31356">
    <property type="entry name" value="THYLAKOID LUMENAL 29 KDA PROTEIN, CHLOROPLASTIC-RELATED"/>
    <property type="match status" value="1"/>
</dbReference>
<dbReference type="Pfam" id="PF00141">
    <property type="entry name" value="peroxidase"/>
    <property type="match status" value="1"/>
</dbReference>
<dbReference type="Pfam" id="PF11895">
    <property type="entry name" value="Peroxidase_ext"/>
    <property type="match status" value="1"/>
</dbReference>
<dbReference type="PRINTS" id="PR00462">
    <property type="entry name" value="LIGNINASE"/>
</dbReference>
<dbReference type="PRINTS" id="PR00458">
    <property type="entry name" value="PEROXIDASE"/>
</dbReference>
<dbReference type="SUPFAM" id="SSF48113">
    <property type="entry name" value="Heme-dependent peroxidases"/>
    <property type="match status" value="1"/>
</dbReference>
<dbReference type="PROSITE" id="PS00435">
    <property type="entry name" value="PEROXIDASE_1"/>
    <property type="match status" value="1"/>
</dbReference>
<dbReference type="PROSITE" id="PS00436">
    <property type="entry name" value="PEROXIDASE_2"/>
    <property type="match status" value="1"/>
</dbReference>
<dbReference type="PROSITE" id="PS50873">
    <property type="entry name" value="PEROXIDASE_4"/>
    <property type="match status" value="1"/>
</dbReference>
<sequence>MALKQLAAAVALALSIQAAQGAAVKEKRATCSNGATVGDASSCAWFDVLDDIQQNLFNGAQCGAEAHESIRLVFHDAIAISPALESQGKFGGGGADGSIILFDDIETNFHPNIGLDEIVNLQKPFIQKHGVTPGDFIAFAGAVAMSNCPGAPQMNFFTGRAPATQAAPDGLVPEPFHTVDQIISRVNDAGEFDELELVWMLSAHSVAAANDVDPTIQGLAFDSTPGVFDSQFFVETQLRGTAFPGSGGNQGEVESPLPGEMRLQSDSSIARDSRTACEWQSFVNNQSKLVSDFQFIFLALTQLGENPDAMTDCSDVIPISKPVPNNVPFSFFPAGKTMADVEQACAETPFPTLTTLPGPETSVQRIQPPPGA</sequence>
<protein>
    <recommendedName>
        <fullName>Ligninase LG6</fullName>
        <ecNumber evidence="1">1.11.1.14</ecNumber>
    </recommendedName>
    <alternativeName>
        <fullName>Diarylpropane peroxidase</fullName>
    </alternativeName>
    <alternativeName>
        <fullName>Lignin peroxidase</fullName>
    </alternativeName>
</protein>
<proteinExistence type="evidence at transcript level"/>
<evidence type="ECO:0000250" key="1">
    <source>
        <dbReference type="UniProtKB" id="P06181"/>
    </source>
</evidence>
<evidence type="ECO:0000255" key="2"/>
<evidence type="ECO:0000255" key="3">
    <source>
        <dbReference type="PROSITE-ProRule" id="PRU00297"/>
    </source>
</evidence>
<evidence type="ECO:0000255" key="4">
    <source>
        <dbReference type="PROSITE-ProRule" id="PRU10012"/>
    </source>
</evidence>
<evidence type="ECO:0000256" key="5">
    <source>
        <dbReference type="SAM" id="MobiDB-lite"/>
    </source>
</evidence>
<evidence type="ECO:0000305" key="6"/>
<feature type="signal peptide" evidence="2">
    <location>
        <begin position="1"/>
        <end position="21"/>
    </location>
</feature>
<feature type="propeptide" id="PRO_0000023770" evidence="2">
    <location>
        <begin position="22"/>
        <end position="28"/>
    </location>
</feature>
<feature type="chain" id="PRO_0000023771" description="Ligninase LG6">
    <location>
        <begin position="29"/>
        <end position="372"/>
    </location>
</feature>
<feature type="region of interest" description="Disordered" evidence="5">
    <location>
        <begin position="352"/>
        <end position="372"/>
    </location>
</feature>
<feature type="compositionally biased region" description="Low complexity" evidence="5">
    <location>
        <begin position="352"/>
        <end position="361"/>
    </location>
</feature>
<feature type="active site" description="Proton acceptor" evidence="3 4">
    <location>
        <position position="75"/>
    </location>
</feature>
<feature type="binding site" evidence="3">
    <location>
        <position position="76"/>
    </location>
    <ligand>
        <name>Ca(2+)</name>
        <dbReference type="ChEBI" id="CHEBI:29108"/>
        <label>1</label>
    </ligand>
</feature>
<feature type="binding site" evidence="3">
    <location>
        <position position="94"/>
    </location>
    <ligand>
        <name>Ca(2+)</name>
        <dbReference type="ChEBI" id="CHEBI:29108"/>
        <label>1</label>
    </ligand>
</feature>
<feature type="binding site" evidence="3">
    <location>
        <position position="96"/>
    </location>
    <ligand>
        <name>Ca(2+)</name>
        <dbReference type="ChEBI" id="CHEBI:29108"/>
        <label>1</label>
    </ligand>
</feature>
<feature type="binding site" evidence="3">
    <location>
        <position position="98"/>
    </location>
    <ligand>
        <name>Ca(2+)</name>
        <dbReference type="ChEBI" id="CHEBI:29108"/>
        <label>1</label>
    </ligand>
</feature>
<feature type="binding site" description="axial binding residue" evidence="3">
    <location>
        <position position="204"/>
    </location>
    <ligand>
        <name>heme b</name>
        <dbReference type="ChEBI" id="CHEBI:60344"/>
    </ligand>
    <ligandPart>
        <name>Fe</name>
        <dbReference type="ChEBI" id="CHEBI:18248"/>
    </ligandPart>
</feature>
<feature type="binding site" evidence="3">
    <location>
        <position position="205"/>
    </location>
    <ligand>
        <name>Ca(2+)</name>
        <dbReference type="ChEBI" id="CHEBI:29108"/>
        <label>2</label>
    </ligand>
</feature>
<feature type="binding site" evidence="3">
    <location>
        <position position="222"/>
    </location>
    <ligand>
        <name>Ca(2+)</name>
        <dbReference type="ChEBI" id="CHEBI:29108"/>
        <label>2</label>
    </ligand>
</feature>
<feature type="binding site" evidence="3">
    <location>
        <position position="224"/>
    </location>
    <ligand>
        <name>Ca(2+)</name>
        <dbReference type="ChEBI" id="CHEBI:29108"/>
        <label>2</label>
    </ligand>
</feature>
<feature type="binding site" evidence="3">
    <location>
        <position position="227"/>
    </location>
    <ligand>
        <name>Ca(2+)</name>
        <dbReference type="ChEBI" id="CHEBI:29108"/>
        <label>2</label>
    </ligand>
</feature>
<feature type="binding site" evidence="3">
    <location>
        <position position="229"/>
    </location>
    <ligand>
        <name>Ca(2+)</name>
        <dbReference type="ChEBI" id="CHEBI:29108"/>
        <label>2</label>
    </ligand>
</feature>
<feature type="site" description="Transition state stabilizer" evidence="3">
    <location>
        <position position="71"/>
    </location>
</feature>
<feature type="glycosylation site" description="N-linked (GlcNAc...) asparagine" evidence="2">
    <location>
        <position position="285"/>
    </location>
</feature>
<feature type="disulfide bond" evidence="3">
    <location>
        <begin position="31"/>
        <end position="43"/>
    </location>
</feature>
<feature type="disulfide bond" evidence="3">
    <location>
        <begin position="62"/>
        <end position="148"/>
    </location>
</feature>
<feature type="disulfide bond" evidence="3">
    <location>
        <begin position="277"/>
        <end position="345"/>
    </location>
</feature>
<accession>P50622</accession>
<organism>
    <name type="scientific">Phanerodontia chrysosporium</name>
    <name type="common">White-rot fungus</name>
    <name type="synonym">Sporotrichum pruinosum</name>
    <dbReference type="NCBI Taxonomy" id="2822231"/>
    <lineage>
        <taxon>Eukaryota</taxon>
        <taxon>Fungi</taxon>
        <taxon>Dikarya</taxon>
        <taxon>Basidiomycota</taxon>
        <taxon>Agaricomycotina</taxon>
        <taxon>Agaricomycetes</taxon>
        <taxon>Polyporales</taxon>
        <taxon>Phanerochaetaceae</taxon>
        <taxon>Phanerodontia</taxon>
    </lineage>
</organism>
<comment type="function">
    <text evidence="1">Depolymerization of lignin. Catalyzes the C(alpha)-C(beta) cleavage of the propyl side chains of lignin.</text>
</comment>
<comment type="catalytic activity">
    <reaction evidence="1">
        <text>1-(3,4-dimethoxyphenyl)-2-(2-methoxyphenoxy)propane-1,3-diol + H2O2 = 3,4-dimethoxybenzaldehyde + guaiacol + glycolaldehyde + H2O</text>
        <dbReference type="Rhea" id="RHEA:48004"/>
        <dbReference type="ChEBI" id="CHEBI:15377"/>
        <dbReference type="ChEBI" id="CHEBI:16240"/>
        <dbReference type="ChEBI" id="CHEBI:17071"/>
        <dbReference type="ChEBI" id="CHEBI:17098"/>
        <dbReference type="ChEBI" id="CHEBI:28591"/>
        <dbReference type="ChEBI" id="CHEBI:86963"/>
        <dbReference type="EC" id="1.11.1.14"/>
    </reaction>
</comment>
<comment type="catalytic activity">
    <reaction evidence="1">
        <text>2 (3,4-dimethoxyphenyl)methanol + H2O2 = 2 (3,4-dimethoxyphenyl)methanol radical + 2 H2O</text>
        <dbReference type="Rhea" id="RHEA:30271"/>
        <dbReference type="ChEBI" id="CHEBI:15377"/>
        <dbReference type="ChEBI" id="CHEBI:16240"/>
        <dbReference type="ChEBI" id="CHEBI:62150"/>
        <dbReference type="ChEBI" id="CHEBI:88143"/>
        <dbReference type="EC" id="1.11.1.14"/>
    </reaction>
</comment>
<comment type="cofactor">
    <cofactor evidence="3">
        <name>heme b</name>
        <dbReference type="ChEBI" id="CHEBI:60344"/>
    </cofactor>
    <text evidence="3">Binds 1 heme b (iron(II)-protoporphyrin IX) group per subunit.</text>
</comment>
<comment type="cofactor">
    <cofactor evidence="3">
        <name>Ca(2+)</name>
        <dbReference type="ChEBI" id="CHEBI:29108"/>
    </cofactor>
    <text evidence="3">Binds 2 calcium ions per subunit.</text>
</comment>
<comment type="pathway">
    <text>Secondary metabolite metabolism; lignin degradation.</text>
</comment>
<comment type="similarity">
    <text evidence="6">Belongs to the peroxidase family. Ligninase subfamily.</text>
</comment>
<gene>
    <name type="primary">GLG6</name>
</gene>
<keyword id="KW-0106">Calcium</keyword>
<keyword id="KW-0165">Cleavage on pair of basic residues</keyword>
<keyword id="KW-1015">Disulfide bond</keyword>
<keyword id="KW-0325">Glycoprotein</keyword>
<keyword id="KW-0349">Heme</keyword>
<keyword id="KW-0376">Hydrogen peroxide</keyword>
<keyword id="KW-0408">Iron</keyword>
<keyword id="KW-0439">Lignin degradation</keyword>
<keyword id="KW-0479">Metal-binding</keyword>
<keyword id="KW-0560">Oxidoreductase</keyword>
<keyword id="KW-0575">Peroxidase</keyword>
<keyword id="KW-0732">Signal</keyword>
<keyword id="KW-0865">Zymogen</keyword>